<sequence length="171" mass="20083">MEKLPKKRVSKTKSQKLIHSLTTQKNRAFLKKISASEMLLELEKGAFKKNEAYFISDEEDKNYVLVPDNVISLLAENARKAFEARLRAELERDIITQAPIDFEDVREVSLQLLENLRQKDGNLPNINTLNFVKQIKKEHPNLFFNFDNMFKQPPFNENNFENFDNSDEENF</sequence>
<proteinExistence type="inferred from homology"/>
<accession>D0ISG9</accession>
<dbReference type="EMBL" id="CP000012">
    <property type="protein sequence ID" value="ACX97862.1"/>
    <property type="molecule type" value="Genomic_DNA"/>
</dbReference>
<dbReference type="RefSeq" id="WP_000413468.1">
    <property type="nucleotide sequence ID" value="NC_017382.1"/>
</dbReference>
<dbReference type="KEGG" id="hpd:KHP_0657"/>
<dbReference type="PATRIC" id="fig|290847.5.peg.719"/>
<dbReference type="HOGENOM" id="CLU_120359_0_0_7"/>
<dbReference type="Proteomes" id="UP000002224">
    <property type="component" value="Chromosome"/>
</dbReference>
<dbReference type="HAMAP" id="MF_02110">
    <property type="entry name" value="UPF0763"/>
    <property type="match status" value="1"/>
</dbReference>
<dbReference type="InterPro" id="IPR019724">
    <property type="entry name" value="UPF0763"/>
</dbReference>
<dbReference type="Pfam" id="PF10788">
    <property type="entry name" value="DUF2603"/>
    <property type="match status" value="1"/>
</dbReference>
<gene>
    <name type="ordered locus">KHP_0657</name>
</gene>
<evidence type="ECO:0000255" key="1">
    <source>
        <dbReference type="HAMAP-Rule" id="MF_02110"/>
    </source>
</evidence>
<comment type="similarity">
    <text evidence="1">Belongs to the UPF0763 family.</text>
</comment>
<organism>
    <name type="scientific">Helicobacter pylori (strain 51)</name>
    <dbReference type="NCBI Taxonomy" id="290847"/>
    <lineage>
        <taxon>Bacteria</taxon>
        <taxon>Pseudomonadati</taxon>
        <taxon>Campylobacterota</taxon>
        <taxon>Epsilonproteobacteria</taxon>
        <taxon>Campylobacterales</taxon>
        <taxon>Helicobacteraceae</taxon>
        <taxon>Helicobacter</taxon>
    </lineage>
</organism>
<name>Y657_HELP1</name>
<reference key="1">
    <citation type="submission" date="2004-08" db="EMBL/GenBank/DDBJ databases">
        <title>Genome sequence of Helicobacter pylori strain 51.</title>
        <authorList>
            <person name="Kim S."/>
            <person name="Lee W.K."/>
            <person name="Choi S.H."/>
            <person name="Kang S."/>
            <person name="Park H.S."/>
            <person name="Kim Y.S."/>
            <person name="Lee S.G."/>
            <person name="Byun E.Y."/>
            <person name="Jeong J.E."/>
            <person name="Park Y.H."/>
            <person name="Lee E.J."/>
            <person name="Kim J.S."/>
            <person name="Ryu B.D."/>
            <person name="Lee Y.S."/>
            <person name="Hahn Y."/>
            <person name="Yeom Y.I."/>
            <person name="Park S.G."/>
            <person name="Youn H.S."/>
            <person name="Ko G.H."/>
            <person name="Choi M.B."/>
            <person name="Park C.H."/>
            <person name="Lim J.Y."/>
            <person name="Bae D.W."/>
            <person name="Song J.Y."/>
            <person name="Park J.U."/>
            <person name="Kang H.L."/>
            <person name="Baik S.C."/>
            <person name="Cho M.J."/>
            <person name="Yoo H.S."/>
            <person name="Rhee K.H."/>
        </authorList>
    </citation>
    <scope>NUCLEOTIDE SEQUENCE [LARGE SCALE GENOMIC DNA]</scope>
    <source>
        <strain>51</strain>
    </source>
</reference>
<feature type="chain" id="PRO_0000394786" description="UPF0763 protein KHP_0657">
    <location>
        <begin position="1"/>
        <end position="171"/>
    </location>
</feature>
<protein>
    <recommendedName>
        <fullName evidence="1">UPF0763 protein KHP_0657</fullName>
    </recommendedName>
</protein>